<reference key="1">
    <citation type="submission" date="2008-01" db="EMBL/GenBank/DDBJ databases">
        <title>Complete sequence of chromosome of Caulobacter sp. K31.</title>
        <authorList>
            <consortium name="US DOE Joint Genome Institute"/>
            <person name="Copeland A."/>
            <person name="Lucas S."/>
            <person name="Lapidus A."/>
            <person name="Barry K."/>
            <person name="Glavina del Rio T."/>
            <person name="Dalin E."/>
            <person name="Tice H."/>
            <person name="Pitluck S."/>
            <person name="Bruce D."/>
            <person name="Goodwin L."/>
            <person name="Thompson L.S."/>
            <person name="Brettin T."/>
            <person name="Detter J.C."/>
            <person name="Han C."/>
            <person name="Schmutz J."/>
            <person name="Larimer F."/>
            <person name="Land M."/>
            <person name="Hauser L."/>
            <person name="Kyrpides N."/>
            <person name="Kim E."/>
            <person name="Stephens C."/>
            <person name="Richardson P."/>
        </authorList>
    </citation>
    <scope>NUCLEOTIDE SEQUENCE [LARGE SCALE GENOMIC DNA]</scope>
    <source>
        <strain>K31</strain>
    </source>
</reference>
<feature type="chain" id="PRO_1000086275" description="Large ribosomal subunit protein uL1">
    <location>
        <begin position="1"/>
        <end position="229"/>
    </location>
</feature>
<comment type="function">
    <text evidence="1">Binds directly to 23S rRNA. The L1 stalk is quite mobile in the ribosome, and is involved in E site tRNA release.</text>
</comment>
<comment type="function">
    <text evidence="1">Protein L1 is also a translational repressor protein, it controls the translation of the L11 operon by binding to its mRNA.</text>
</comment>
<comment type="subunit">
    <text evidence="1">Part of the 50S ribosomal subunit.</text>
</comment>
<comment type="similarity">
    <text evidence="1">Belongs to the universal ribosomal protein uL1 family.</text>
</comment>
<proteinExistence type="inferred from homology"/>
<name>RL1_CAUSK</name>
<dbReference type="EMBL" id="CP000927">
    <property type="protein sequence ID" value="ABZ73554.1"/>
    <property type="molecule type" value="Genomic_DNA"/>
</dbReference>
<dbReference type="SMR" id="B0T064"/>
<dbReference type="STRING" id="366602.Caul_4434"/>
<dbReference type="KEGG" id="cak:Caul_4434"/>
<dbReference type="eggNOG" id="COG0081">
    <property type="taxonomic scope" value="Bacteria"/>
</dbReference>
<dbReference type="HOGENOM" id="CLU_062853_0_0_5"/>
<dbReference type="OrthoDB" id="9803740at2"/>
<dbReference type="GO" id="GO:0022625">
    <property type="term" value="C:cytosolic large ribosomal subunit"/>
    <property type="evidence" value="ECO:0007669"/>
    <property type="project" value="TreeGrafter"/>
</dbReference>
<dbReference type="GO" id="GO:0019843">
    <property type="term" value="F:rRNA binding"/>
    <property type="evidence" value="ECO:0007669"/>
    <property type="project" value="UniProtKB-UniRule"/>
</dbReference>
<dbReference type="GO" id="GO:0003735">
    <property type="term" value="F:structural constituent of ribosome"/>
    <property type="evidence" value="ECO:0007669"/>
    <property type="project" value="InterPro"/>
</dbReference>
<dbReference type="GO" id="GO:0000049">
    <property type="term" value="F:tRNA binding"/>
    <property type="evidence" value="ECO:0007669"/>
    <property type="project" value="UniProtKB-KW"/>
</dbReference>
<dbReference type="GO" id="GO:0006417">
    <property type="term" value="P:regulation of translation"/>
    <property type="evidence" value="ECO:0007669"/>
    <property type="project" value="UniProtKB-KW"/>
</dbReference>
<dbReference type="GO" id="GO:0006412">
    <property type="term" value="P:translation"/>
    <property type="evidence" value="ECO:0007669"/>
    <property type="project" value="UniProtKB-UniRule"/>
</dbReference>
<dbReference type="CDD" id="cd00403">
    <property type="entry name" value="Ribosomal_L1"/>
    <property type="match status" value="1"/>
</dbReference>
<dbReference type="FunFam" id="3.40.50.790:FF:000001">
    <property type="entry name" value="50S ribosomal protein L1"/>
    <property type="match status" value="1"/>
</dbReference>
<dbReference type="Gene3D" id="3.30.190.20">
    <property type="match status" value="1"/>
</dbReference>
<dbReference type="Gene3D" id="3.40.50.790">
    <property type="match status" value="1"/>
</dbReference>
<dbReference type="HAMAP" id="MF_01318_B">
    <property type="entry name" value="Ribosomal_uL1_B"/>
    <property type="match status" value="1"/>
</dbReference>
<dbReference type="InterPro" id="IPR005878">
    <property type="entry name" value="Ribosom_uL1_bac-type"/>
</dbReference>
<dbReference type="InterPro" id="IPR002143">
    <property type="entry name" value="Ribosomal_uL1"/>
</dbReference>
<dbReference type="InterPro" id="IPR023674">
    <property type="entry name" value="Ribosomal_uL1-like"/>
</dbReference>
<dbReference type="InterPro" id="IPR028364">
    <property type="entry name" value="Ribosomal_uL1/biogenesis"/>
</dbReference>
<dbReference type="InterPro" id="IPR016095">
    <property type="entry name" value="Ribosomal_uL1_3-a/b-sand"/>
</dbReference>
<dbReference type="InterPro" id="IPR023673">
    <property type="entry name" value="Ribosomal_uL1_CS"/>
</dbReference>
<dbReference type="NCBIfam" id="TIGR01169">
    <property type="entry name" value="rplA_bact"/>
    <property type="match status" value="1"/>
</dbReference>
<dbReference type="PANTHER" id="PTHR36427">
    <property type="entry name" value="54S RIBOSOMAL PROTEIN L1, MITOCHONDRIAL"/>
    <property type="match status" value="1"/>
</dbReference>
<dbReference type="PANTHER" id="PTHR36427:SF3">
    <property type="entry name" value="LARGE RIBOSOMAL SUBUNIT PROTEIN UL1M"/>
    <property type="match status" value="1"/>
</dbReference>
<dbReference type="Pfam" id="PF00687">
    <property type="entry name" value="Ribosomal_L1"/>
    <property type="match status" value="1"/>
</dbReference>
<dbReference type="PIRSF" id="PIRSF002155">
    <property type="entry name" value="Ribosomal_L1"/>
    <property type="match status" value="1"/>
</dbReference>
<dbReference type="SUPFAM" id="SSF56808">
    <property type="entry name" value="Ribosomal protein L1"/>
    <property type="match status" value="1"/>
</dbReference>
<dbReference type="PROSITE" id="PS01199">
    <property type="entry name" value="RIBOSOMAL_L1"/>
    <property type="match status" value="1"/>
</dbReference>
<gene>
    <name evidence="1" type="primary">rplA</name>
    <name type="ordered locus">Caul_4434</name>
</gene>
<keyword id="KW-0678">Repressor</keyword>
<keyword id="KW-0687">Ribonucleoprotein</keyword>
<keyword id="KW-0689">Ribosomal protein</keyword>
<keyword id="KW-0694">RNA-binding</keyword>
<keyword id="KW-0699">rRNA-binding</keyword>
<keyword id="KW-0810">Translation regulation</keyword>
<keyword id="KW-0820">tRNA-binding</keyword>
<organism>
    <name type="scientific">Caulobacter sp. (strain K31)</name>
    <dbReference type="NCBI Taxonomy" id="366602"/>
    <lineage>
        <taxon>Bacteria</taxon>
        <taxon>Pseudomonadati</taxon>
        <taxon>Pseudomonadota</taxon>
        <taxon>Alphaproteobacteria</taxon>
        <taxon>Caulobacterales</taxon>
        <taxon>Caulobacteraceae</taxon>
        <taxon>Caulobacter</taxon>
    </lineage>
</organism>
<protein>
    <recommendedName>
        <fullName evidence="1">Large ribosomal subunit protein uL1</fullName>
    </recommendedName>
    <alternativeName>
        <fullName evidence="2">50S ribosomal protein L1</fullName>
    </alternativeName>
</protein>
<evidence type="ECO:0000255" key="1">
    <source>
        <dbReference type="HAMAP-Rule" id="MF_01318"/>
    </source>
</evidence>
<evidence type="ECO:0000305" key="2"/>
<sequence length="229" mass="23831">MAKQPKRIQAWTGDREAAHAVAEAIALVKANAKAKFDESIEISVNLGVDPRHADQQVRGVVNLPSGTGRDVRVAVFAKDAKAAEATAAGAEHVGAEDLYEKIVGGFMDFDRVIATPDMMALVGRLGKVLGPRGLMPNPKVGTVTPNVGQAVKDAKGGAVEFRVEKAGIVHAGIGKVSFTDEALLINVKAMVDALVKAKPAGAKGIYVKRIGLSSTMGPGFKIDIASVNA</sequence>
<accession>B0T064</accession>